<proteinExistence type="inferred from homology"/>
<comment type="function">
    <text evidence="1">Found at the monomer-monomer interface of the photosystem II (PS II) dimer, plays a role in assembly and dimerization of PSII. PSII is a light-driven water plastoquinone oxidoreductase, using light energy to abstract electrons from H(2)O, generating a proton gradient subsequently used for ATP formation.</text>
</comment>
<comment type="subunit">
    <text evidence="2">PSII is composed of 1 copy each of membrane proteins PsbA, PsbB, PsbC, PsbD, PsbE, PsbF, PsbH, PsbI, PsbJ, PsbK, PsbL, PsbM, PsbT, PsbX, PsbY, Psb30/Ycf12, peripheral proteins PsbO, CyanoQ (PsbQ), PsbU, PsbV and a large number of cofactors. It forms dimeric complexes.</text>
</comment>
<comment type="subcellular location">
    <subcellularLocation>
        <location evidence="1">Cellular thylakoid membrane</location>
        <topology evidence="1">Single-pass membrane protein</topology>
    </subcellularLocation>
</comment>
<comment type="similarity">
    <text evidence="1">Belongs to the PsbT family.</text>
</comment>
<name>PSBT_PROM0</name>
<dbReference type="EMBL" id="CP000576">
    <property type="protein sequence ID" value="ABO16962.1"/>
    <property type="molecule type" value="Genomic_DNA"/>
</dbReference>
<dbReference type="RefSeq" id="WP_011131951.1">
    <property type="nucleotide sequence ID" value="NC_009091.1"/>
</dbReference>
<dbReference type="SMR" id="A3PB37"/>
<dbReference type="STRING" id="167546.P9301_03391"/>
<dbReference type="KEGG" id="pmg:P9301_03391"/>
<dbReference type="eggNOG" id="ENOG5031U72">
    <property type="taxonomic scope" value="Bacteria"/>
</dbReference>
<dbReference type="HOGENOM" id="CLU_217078_1_0_3"/>
<dbReference type="OrthoDB" id="427659at2"/>
<dbReference type="Proteomes" id="UP000001430">
    <property type="component" value="Chromosome"/>
</dbReference>
<dbReference type="GO" id="GO:0009539">
    <property type="term" value="C:photosystem II reaction center"/>
    <property type="evidence" value="ECO:0007669"/>
    <property type="project" value="InterPro"/>
</dbReference>
<dbReference type="GO" id="GO:0031676">
    <property type="term" value="C:plasma membrane-derived thylakoid membrane"/>
    <property type="evidence" value="ECO:0007669"/>
    <property type="project" value="UniProtKB-SubCell"/>
</dbReference>
<dbReference type="GO" id="GO:0015979">
    <property type="term" value="P:photosynthesis"/>
    <property type="evidence" value="ECO:0007669"/>
    <property type="project" value="UniProtKB-UniRule"/>
</dbReference>
<dbReference type="HAMAP" id="MF_00808">
    <property type="entry name" value="PSII_PsbT"/>
    <property type="match status" value="1"/>
</dbReference>
<dbReference type="InterPro" id="IPR001743">
    <property type="entry name" value="PSII_PsbT"/>
</dbReference>
<dbReference type="InterPro" id="IPR037268">
    <property type="entry name" value="PSII_PsbT_sf"/>
</dbReference>
<dbReference type="NCBIfam" id="NF008825">
    <property type="entry name" value="PRK11875.1"/>
    <property type="match status" value="1"/>
</dbReference>
<dbReference type="Pfam" id="PF01405">
    <property type="entry name" value="PsbT"/>
    <property type="match status" value="1"/>
</dbReference>
<dbReference type="SUPFAM" id="SSF161029">
    <property type="entry name" value="Photosystem II reaction center protein T, PsbT"/>
    <property type="match status" value="1"/>
</dbReference>
<evidence type="ECO:0000255" key="1">
    <source>
        <dbReference type="HAMAP-Rule" id="MF_00808"/>
    </source>
</evidence>
<evidence type="ECO:0000305" key="2"/>
<keyword id="KW-0472">Membrane</keyword>
<keyword id="KW-0602">Photosynthesis</keyword>
<keyword id="KW-0604">Photosystem II</keyword>
<keyword id="KW-1185">Reference proteome</keyword>
<keyword id="KW-0793">Thylakoid</keyword>
<keyword id="KW-0812">Transmembrane</keyword>
<keyword id="KW-1133">Transmembrane helix</keyword>
<gene>
    <name evidence="1" type="primary">psbT</name>
    <name type="ordered locus">P9301_03391</name>
</gene>
<reference key="1">
    <citation type="journal article" date="2007" name="PLoS Genet.">
        <title>Patterns and implications of gene gain and loss in the evolution of Prochlorococcus.</title>
        <authorList>
            <person name="Kettler G.C."/>
            <person name="Martiny A.C."/>
            <person name="Huang K."/>
            <person name="Zucker J."/>
            <person name="Coleman M.L."/>
            <person name="Rodrigue S."/>
            <person name="Chen F."/>
            <person name="Lapidus A."/>
            <person name="Ferriera S."/>
            <person name="Johnson J."/>
            <person name="Steglich C."/>
            <person name="Church G.M."/>
            <person name="Richardson P."/>
            <person name="Chisholm S.W."/>
        </authorList>
    </citation>
    <scope>NUCLEOTIDE SEQUENCE [LARGE SCALE GENOMIC DNA]</scope>
    <source>
        <strain>MIT 9301</strain>
    </source>
</reference>
<feature type="chain" id="PRO_1000047093" description="Photosystem II reaction center protein T">
    <location>
        <begin position="1"/>
        <end position="32"/>
    </location>
</feature>
<feature type="transmembrane region" description="Helical" evidence="1">
    <location>
        <begin position="3"/>
        <end position="23"/>
    </location>
</feature>
<sequence>MEAFAYVLILTLAVVTLFFAVAFRDPPKFDRK</sequence>
<protein>
    <recommendedName>
        <fullName evidence="1">Photosystem II reaction center protein T</fullName>
        <shortName evidence="1">PSII-T</shortName>
    </recommendedName>
</protein>
<accession>A3PB37</accession>
<organism>
    <name type="scientific">Prochlorococcus marinus (strain MIT 9301)</name>
    <dbReference type="NCBI Taxonomy" id="167546"/>
    <lineage>
        <taxon>Bacteria</taxon>
        <taxon>Bacillati</taxon>
        <taxon>Cyanobacteriota</taxon>
        <taxon>Cyanophyceae</taxon>
        <taxon>Synechococcales</taxon>
        <taxon>Prochlorococcaceae</taxon>
        <taxon>Prochlorococcus</taxon>
    </lineage>
</organism>